<sequence>MAEKKGSSGEKTLYCSFCGKSQHEVKKLIAGPSVFICDECIDLCNEIIRDELPAGEDVRETRTDLPTPAEIKATLDGYVIGQEPAKRTLAVAVYNHYKRLRHKEKAKKDDVELTKSNILLIGPTGSGKTLLAQTLARTLNVPFVMADATTLTEAGYVGEDVENIIQKLLQSCNYEVERAQQGIVYIDEIDKISRKSDNPSITRDVSGEGVQQALLKLIEGTMASVPPQGGRKHPNQDFLQVDTTNILFICGGAFSGLEKVIENRTEASGIGFGALVKSKKTRSLTESFKEVEPEDLIKFGLIPELVGRMPVVATLAELTEDALVQILTEPKNAVVKQFSKLLSMEGVDLEIRPSALKAIARKALARKTGARGLRSILEQSLIDTMFDLPNASNVDKVVVDESTIEENKAPLLVYRETAKKA</sequence>
<name>CLPX_POLSJ</name>
<comment type="function">
    <text evidence="1">ATP-dependent specificity component of the Clp protease. It directs the protease to specific substrates. Can perform chaperone functions in the absence of ClpP.</text>
</comment>
<comment type="subunit">
    <text evidence="1">Component of the ClpX-ClpP complex. Forms a hexameric ring that, in the presence of ATP, binds to fourteen ClpP subunits assembled into a disk-like structure with a central cavity, resembling the structure of eukaryotic proteasomes.</text>
</comment>
<comment type="similarity">
    <text evidence="1">Belongs to the ClpX chaperone family.</text>
</comment>
<evidence type="ECO:0000255" key="1">
    <source>
        <dbReference type="HAMAP-Rule" id="MF_00175"/>
    </source>
</evidence>
<evidence type="ECO:0000255" key="2">
    <source>
        <dbReference type="PROSITE-ProRule" id="PRU01250"/>
    </source>
</evidence>
<dbReference type="EMBL" id="CP000316">
    <property type="protein sequence ID" value="ABE43961.1"/>
    <property type="molecule type" value="Genomic_DNA"/>
</dbReference>
<dbReference type="RefSeq" id="WP_011482960.1">
    <property type="nucleotide sequence ID" value="NC_007948.1"/>
</dbReference>
<dbReference type="SMR" id="Q12BY1"/>
<dbReference type="STRING" id="296591.Bpro_2031"/>
<dbReference type="KEGG" id="pol:Bpro_2031"/>
<dbReference type="eggNOG" id="COG1219">
    <property type="taxonomic scope" value="Bacteria"/>
</dbReference>
<dbReference type="HOGENOM" id="CLU_014218_8_2_4"/>
<dbReference type="OrthoDB" id="9804062at2"/>
<dbReference type="Proteomes" id="UP000001983">
    <property type="component" value="Chromosome"/>
</dbReference>
<dbReference type="GO" id="GO:0009376">
    <property type="term" value="C:HslUV protease complex"/>
    <property type="evidence" value="ECO:0007669"/>
    <property type="project" value="TreeGrafter"/>
</dbReference>
<dbReference type="GO" id="GO:0005524">
    <property type="term" value="F:ATP binding"/>
    <property type="evidence" value="ECO:0007669"/>
    <property type="project" value="UniProtKB-UniRule"/>
</dbReference>
<dbReference type="GO" id="GO:0016887">
    <property type="term" value="F:ATP hydrolysis activity"/>
    <property type="evidence" value="ECO:0007669"/>
    <property type="project" value="InterPro"/>
</dbReference>
<dbReference type="GO" id="GO:0140662">
    <property type="term" value="F:ATP-dependent protein folding chaperone"/>
    <property type="evidence" value="ECO:0007669"/>
    <property type="project" value="InterPro"/>
</dbReference>
<dbReference type="GO" id="GO:0046983">
    <property type="term" value="F:protein dimerization activity"/>
    <property type="evidence" value="ECO:0007669"/>
    <property type="project" value="InterPro"/>
</dbReference>
<dbReference type="GO" id="GO:0051082">
    <property type="term" value="F:unfolded protein binding"/>
    <property type="evidence" value="ECO:0007669"/>
    <property type="project" value="UniProtKB-UniRule"/>
</dbReference>
<dbReference type="GO" id="GO:0008270">
    <property type="term" value="F:zinc ion binding"/>
    <property type="evidence" value="ECO:0007669"/>
    <property type="project" value="InterPro"/>
</dbReference>
<dbReference type="GO" id="GO:0051301">
    <property type="term" value="P:cell division"/>
    <property type="evidence" value="ECO:0007669"/>
    <property type="project" value="TreeGrafter"/>
</dbReference>
<dbReference type="GO" id="GO:0051603">
    <property type="term" value="P:proteolysis involved in protein catabolic process"/>
    <property type="evidence" value="ECO:0007669"/>
    <property type="project" value="TreeGrafter"/>
</dbReference>
<dbReference type="CDD" id="cd19497">
    <property type="entry name" value="RecA-like_ClpX"/>
    <property type="match status" value="1"/>
</dbReference>
<dbReference type="FunFam" id="1.10.8.60:FF:000002">
    <property type="entry name" value="ATP-dependent Clp protease ATP-binding subunit ClpX"/>
    <property type="match status" value="1"/>
</dbReference>
<dbReference type="FunFam" id="3.40.50.300:FF:000005">
    <property type="entry name" value="ATP-dependent Clp protease ATP-binding subunit ClpX"/>
    <property type="match status" value="1"/>
</dbReference>
<dbReference type="Gene3D" id="1.10.8.60">
    <property type="match status" value="1"/>
</dbReference>
<dbReference type="Gene3D" id="6.20.220.10">
    <property type="entry name" value="ClpX chaperone, C4-type zinc finger domain"/>
    <property type="match status" value="1"/>
</dbReference>
<dbReference type="Gene3D" id="3.40.50.300">
    <property type="entry name" value="P-loop containing nucleotide triphosphate hydrolases"/>
    <property type="match status" value="1"/>
</dbReference>
<dbReference type="HAMAP" id="MF_00175">
    <property type="entry name" value="ClpX"/>
    <property type="match status" value="1"/>
</dbReference>
<dbReference type="InterPro" id="IPR003593">
    <property type="entry name" value="AAA+_ATPase"/>
</dbReference>
<dbReference type="InterPro" id="IPR050052">
    <property type="entry name" value="ATP-dep_Clp_protease_ClpX"/>
</dbReference>
<dbReference type="InterPro" id="IPR003959">
    <property type="entry name" value="ATPase_AAA_core"/>
</dbReference>
<dbReference type="InterPro" id="IPR019489">
    <property type="entry name" value="Clp_ATPase_C"/>
</dbReference>
<dbReference type="InterPro" id="IPR004487">
    <property type="entry name" value="Clp_protease_ATP-bd_su_ClpX"/>
</dbReference>
<dbReference type="InterPro" id="IPR046425">
    <property type="entry name" value="ClpX_bact"/>
</dbReference>
<dbReference type="InterPro" id="IPR027417">
    <property type="entry name" value="P-loop_NTPase"/>
</dbReference>
<dbReference type="InterPro" id="IPR010603">
    <property type="entry name" value="Znf_CppX_C4"/>
</dbReference>
<dbReference type="InterPro" id="IPR038366">
    <property type="entry name" value="Znf_CppX_C4_sf"/>
</dbReference>
<dbReference type="NCBIfam" id="TIGR00382">
    <property type="entry name" value="clpX"/>
    <property type="match status" value="1"/>
</dbReference>
<dbReference type="NCBIfam" id="NF003745">
    <property type="entry name" value="PRK05342.1"/>
    <property type="match status" value="1"/>
</dbReference>
<dbReference type="PANTHER" id="PTHR48102:SF7">
    <property type="entry name" value="ATP-DEPENDENT CLP PROTEASE ATP-BINDING SUBUNIT CLPX-LIKE, MITOCHONDRIAL"/>
    <property type="match status" value="1"/>
</dbReference>
<dbReference type="PANTHER" id="PTHR48102">
    <property type="entry name" value="ATP-DEPENDENT CLP PROTEASE ATP-BINDING SUBUNIT CLPX-LIKE, MITOCHONDRIAL-RELATED"/>
    <property type="match status" value="1"/>
</dbReference>
<dbReference type="Pfam" id="PF07724">
    <property type="entry name" value="AAA_2"/>
    <property type="match status" value="1"/>
</dbReference>
<dbReference type="Pfam" id="PF10431">
    <property type="entry name" value="ClpB_D2-small"/>
    <property type="match status" value="1"/>
</dbReference>
<dbReference type="Pfam" id="PF06689">
    <property type="entry name" value="zf-C4_ClpX"/>
    <property type="match status" value="1"/>
</dbReference>
<dbReference type="SMART" id="SM00382">
    <property type="entry name" value="AAA"/>
    <property type="match status" value="1"/>
</dbReference>
<dbReference type="SMART" id="SM01086">
    <property type="entry name" value="ClpB_D2-small"/>
    <property type="match status" value="1"/>
</dbReference>
<dbReference type="SMART" id="SM00994">
    <property type="entry name" value="zf-C4_ClpX"/>
    <property type="match status" value="1"/>
</dbReference>
<dbReference type="SUPFAM" id="SSF57716">
    <property type="entry name" value="Glucocorticoid receptor-like (DNA-binding domain)"/>
    <property type="match status" value="1"/>
</dbReference>
<dbReference type="SUPFAM" id="SSF52540">
    <property type="entry name" value="P-loop containing nucleoside triphosphate hydrolases"/>
    <property type="match status" value="1"/>
</dbReference>
<dbReference type="PROSITE" id="PS51902">
    <property type="entry name" value="CLPX_ZB"/>
    <property type="match status" value="1"/>
</dbReference>
<protein>
    <recommendedName>
        <fullName evidence="1">ATP-dependent Clp protease ATP-binding subunit ClpX</fullName>
    </recommendedName>
</protein>
<keyword id="KW-0067">ATP-binding</keyword>
<keyword id="KW-0143">Chaperone</keyword>
<keyword id="KW-0479">Metal-binding</keyword>
<keyword id="KW-0547">Nucleotide-binding</keyword>
<keyword id="KW-1185">Reference proteome</keyword>
<keyword id="KW-0862">Zinc</keyword>
<accession>Q12BY1</accession>
<organism>
    <name type="scientific">Polaromonas sp. (strain JS666 / ATCC BAA-500)</name>
    <dbReference type="NCBI Taxonomy" id="296591"/>
    <lineage>
        <taxon>Bacteria</taxon>
        <taxon>Pseudomonadati</taxon>
        <taxon>Pseudomonadota</taxon>
        <taxon>Betaproteobacteria</taxon>
        <taxon>Burkholderiales</taxon>
        <taxon>Comamonadaceae</taxon>
        <taxon>Polaromonas</taxon>
    </lineage>
</organism>
<feature type="chain" id="PRO_1000024611" description="ATP-dependent Clp protease ATP-binding subunit ClpX">
    <location>
        <begin position="1"/>
        <end position="421"/>
    </location>
</feature>
<feature type="domain" description="ClpX-type ZB" evidence="2">
    <location>
        <begin position="3"/>
        <end position="56"/>
    </location>
</feature>
<feature type="binding site" evidence="2">
    <location>
        <position position="15"/>
    </location>
    <ligand>
        <name>Zn(2+)</name>
        <dbReference type="ChEBI" id="CHEBI:29105"/>
    </ligand>
</feature>
<feature type="binding site" evidence="2">
    <location>
        <position position="18"/>
    </location>
    <ligand>
        <name>Zn(2+)</name>
        <dbReference type="ChEBI" id="CHEBI:29105"/>
    </ligand>
</feature>
<feature type="binding site" evidence="2">
    <location>
        <position position="37"/>
    </location>
    <ligand>
        <name>Zn(2+)</name>
        <dbReference type="ChEBI" id="CHEBI:29105"/>
    </ligand>
</feature>
<feature type="binding site" evidence="2">
    <location>
        <position position="40"/>
    </location>
    <ligand>
        <name>Zn(2+)</name>
        <dbReference type="ChEBI" id="CHEBI:29105"/>
    </ligand>
</feature>
<feature type="binding site" evidence="1">
    <location>
        <begin position="123"/>
        <end position="130"/>
    </location>
    <ligand>
        <name>ATP</name>
        <dbReference type="ChEBI" id="CHEBI:30616"/>
    </ligand>
</feature>
<proteinExistence type="inferred from homology"/>
<gene>
    <name evidence="1" type="primary">clpX</name>
    <name type="ordered locus">Bpro_2031</name>
</gene>
<reference key="1">
    <citation type="journal article" date="2008" name="Appl. Environ. Microbiol.">
        <title>The genome of Polaromonas sp. strain JS666: insights into the evolution of a hydrocarbon- and xenobiotic-degrading bacterium, and features of relevance to biotechnology.</title>
        <authorList>
            <person name="Mattes T.E."/>
            <person name="Alexander A.K."/>
            <person name="Richardson P.M."/>
            <person name="Munk A.C."/>
            <person name="Han C.S."/>
            <person name="Stothard P."/>
            <person name="Coleman N.V."/>
        </authorList>
    </citation>
    <scope>NUCLEOTIDE SEQUENCE [LARGE SCALE GENOMIC DNA]</scope>
    <source>
        <strain>JS666 / ATCC BAA-500</strain>
    </source>
</reference>